<sequence length="69" mass="7643">MMSKLGVLLTICLLLFPLSALPLDGDQPADQPAERVQDISPDQNPLFHLVKRGCCPYPKCIHVTFCKCC</sequence>
<keyword id="KW-0165">Cleavage on pair of basic residues</keyword>
<keyword id="KW-1015">Disulfide bond</keyword>
<keyword id="KW-0964">Secreted</keyword>
<keyword id="KW-0732">Signal</keyword>
<keyword id="KW-0800">Toxin</keyword>
<evidence type="ECO:0000250" key="1">
    <source>
        <dbReference type="UniProtKB" id="Q5EHP3"/>
    </source>
</evidence>
<evidence type="ECO:0000255" key="2"/>
<evidence type="ECO:0000303" key="3">
    <source>
    </source>
</evidence>
<evidence type="ECO:0000305" key="4"/>
<evidence type="ECO:0000305" key="5">
    <source>
    </source>
</evidence>
<evidence type="ECO:0000312" key="6">
    <source>
        <dbReference type="EMBL" id="AUJ88064.1"/>
    </source>
</evidence>
<organism>
    <name type="scientific">Conus regius</name>
    <name type="common">Crown cone</name>
    <dbReference type="NCBI Taxonomy" id="101314"/>
    <lineage>
        <taxon>Eukaryota</taxon>
        <taxon>Metazoa</taxon>
        <taxon>Spiralia</taxon>
        <taxon>Lophotrochozoa</taxon>
        <taxon>Mollusca</taxon>
        <taxon>Gastropoda</taxon>
        <taxon>Caenogastropoda</taxon>
        <taxon>Neogastropoda</taxon>
        <taxon>Conoidea</taxon>
        <taxon>Conidae</taxon>
        <taxon>Conus</taxon>
        <taxon>Stephanoconus</taxon>
    </lineage>
</organism>
<feature type="signal peptide" evidence="2">
    <location>
        <begin position="1"/>
        <end position="20"/>
    </location>
</feature>
<feature type="propeptide" id="PRO_0000444773" evidence="5">
    <location>
        <begin position="21"/>
        <end position="52"/>
    </location>
</feature>
<feature type="peptide" id="PRO_5014455500" description="Conotoxin reg3.6" evidence="5">
    <location>
        <begin position="53"/>
        <end position="69"/>
    </location>
</feature>
<feature type="disulfide bond" evidence="1">
    <location>
        <begin position="54"/>
        <end position="68"/>
    </location>
</feature>
<feature type="disulfide bond" evidence="1">
    <location>
        <begin position="55"/>
        <end position="66"/>
    </location>
</feature>
<feature type="disulfide bond" evidence="1">
    <location>
        <begin position="60"/>
        <end position="69"/>
    </location>
</feature>
<name>CM36_CONRE</name>
<accession>A0A2I6EDM5</accession>
<proteinExistence type="inferred from homology"/>
<reference key="1">
    <citation type="journal article" date="2017" name="FEBS J.">
        <title>Structural plasticity of Mini-M conotoxins: expression of all mini-M subtypes by Conus regius.</title>
        <authorList>
            <person name="Franco A."/>
            <person name="Dovell S."/>
            <person name="Moller C."/>
            <person name="Grandal M."/>
            <person name="Clark E."/>
            <person name="Mari F."/>
        </authorList>
    </citation>
    <scope>NUCLEOTIDE SEQUENCE [MRNA]</scope>
    <source>
        <tissue>Venom duct</tissue>
    </source>
</reference>
<protein>
    <recommendedName>
        <fullName evidence="3">Conotoxin reg3.6</fullName>
        <shortName evidence="6">Rg3.6</shortName>
    </recommendedName>
</protein>
<comment type="subcellular location">
    <subcellularLocation>
        <location evidence="5">Secreted</location>
    </subcellularLocation>
</comment>
<comment type="tissue specificity">
    <text evidence="5">Expressed by the venom duct.</text>
</comment>
<comment type="domain">
    <text evidence="4">The cysteine framework is III (CC-C-C-CC). Classified in the M-1 branch, since 1 residue stands between the fourth and the fifth cysteine residues.</text>
</comment>
<comment type="similarity">
    <text evidence="4">Belongs to the conotoxin M superfamily.</text>
</comment>
<dbReference type="EMBL" id="MF588940">
    <property type="protein sequence ID" value="AUJ88064.1"/>
    <property type="molecule type" value="mRNA"/>
</dbReference>
<dbReference type="GO" id="GO:0005576">
    <property type="term" value="C:extracellular region"/>
    <property type="evidence" value="ECO:0007669"/>
    <property type="project" value="UniProtKB-SubCell"/>
</dbReference>
<dbReference type="GO" id="GO:0008200">
    <property type="term" value="F:ion channel inhibitor activity"/>
    <property type="evidence" value="ECO:0007669"/>
    <property type="project" value="InterPro"/>
</dbReference>
<dbReference type="GO" id="GO:0090729">
    <property type="term" value="F:toxin activity"/>
    <property type="evidence" value="ECO:0007669"/>
    <property type="project" value="UniProtKB-KW"/>
</dbReference>
<dbReference type="InterPro" id="IPR004214">
    <property type="entry name" value="Conotoxin"/>
</dbReference>
<dbReference type="Pfam" id="PF02950">
    <property type="entry name" value="Conotoxin"/>
    <property type="match status" value="1"/>
</dbReference>